<accession>B7N6K5</accession>
<dbReference type="EMBL" id="CU928163">
    <property type="protein sequence ID" value="CAR14115.1"/>
    <property type="molecule type" value="Genomic_DNA"/>
</dbReference>
<dbReference type="RefSeq" id="WP_000162574.1">
    <property type="nucleotide sequence ID" value="NC_011751.1"/>
</dbReference>
<dbReference type="RefSeq" id="YP_002413639.1">
    <property type="nucleotide sequence ID" value="NC_011751.1"/>
</dbReference>
<dbReference type="SMR" id="B7N6K5"/>
<dbReference type="STRING" id="585056.ECUMN_2944"/>
<dbReference type="GeneID" id="93774470"/>
<dbReference type="KEGG" id="eum:ECUMN_2944"/>
<dbReference type="PATRIC" id="fig|585056.7.peg.3126"/>
<dbReference type="HOGENOM" id="CLU_108953_3_0_6"/>
<dbReference type="Proteomes" id="UP000007097">
    <property type="component" value="Chromosome"/>
</dbReference>
<dbReference type="GO" id="GO:0005829">
    <property type="term" value="C:cytosol"/>
    <property type="evidence" value="ECO:0007669"/>
    <property type="project" value="TreeGrafter"/>
</dbReference>
<dbReference type="GO" id="GO:0003723">
    <property type="term" value="F:RNA binding"/>
    <property type="evidence" value="ECO:0007669"/>
    <property type="project" value="UniProtKB-UniRule"/>
</dbReference>
<dbReference type="GO" id="GO:0070929">
    <property type="term" value="P:trans-translation"/>
    <property type="evidence" value="ECO:0007669"/>
    <property type="project" value="UniProtKB-UniRule"/>
</dbReference>
<dbReference type="CDD" id="cd09294">
    <property type="entry name" value="SmpB"/>
    <property type="match status" value="1"/>
</dbReference>
<dbReference type="FunFam" id="2.40.280.10:FF:000001">
    <property type="entry name" value="SsrA-binding protein"/>
    <property type="match status" value="1"/>
</dbReference>
<dbReference type="Gene3D" id="2.40.280.10">
    <property type="match status" value="1"/>
</dbReference>
<dbReference type="HAMAP" id="MF_00023">
    <property type="entry name" value="SmpB"/>
    <property type="match status" value="1"/>
</dbReference>
<dbReference type="InterPro" id="IPR023620">
    <property type="entry name" value="SmpB"/>
</dbReference>
<dbReference type="InterPro" id="IPR000037">
    <property type="entry name" value="SsrA-bd_prot"/>
</dbReference>
<dbReference type="InterPro" id="IPR020081">
    <property type="entry name" value="SsrA-bd_prot_CS"/>
</dbReference>
<dbReference type="NCBIfam" id="NF003843">
    <property type="entry name" value="PRK05422.1"/>
    <property type="match status" value="1"/>
</dbReference>
<dbReference type="NCBIfam" id="TIGR00086">
    <property type="entry name" value="smpB"/>
    <property type="match status" value="1"/>
</dbReference>
<dbReference type="PANTHER" id="PTHR30308:SF2">
    <property type="entry name" value="SSRA-BINDING PROTEIN"/>
    <property type="match status" value="1"/>
</dbReference>
<dbReference type="PANTHER" id="PTHR30308">
    <property type="entry name" value="TMRNA-BINDING COMPONENT OF TRANS-TRANSLATION TAGGING COMPLEX"/>
    <property type="match status" value="1"/>
</dbReference>
<dbReference type="Pfam" id="PF01668">
    <property type="entry name" value="SmpB"/>
    <property type="match status" value="1"/>
</dbReference>
<dbReference type="SUPFAM" id="SSF74982">
    <property type="entry name" value="Small protein B (SmpB)"/>
    <property type="match status" value="1"/>
</dbReference>
<dbReference type="PROSITE" id="PS01317">
    <property type="entry name" value="SSRP"/>
    <property type="match status" value="1"/>
</dbReference>
<gene>
    <name evidence="1" type="primary">smpB</name>
    <name type="ordered locus">ECUMN_2944</name>
</gene>
<proteinExistence type="inferred from homology"/>
<feature type="chain" id="PRO_1000116422" description="SsrA-binding protein">
    <location>
        <begin position="1"/>
        <end position="160"/>
    </location>
</feature>
<keyword id="KW-0963">Cytoplasm</keyword>
<keyword id="KW-0694">RNA-binding</keyword>
<evidence type="ECO:0000255" key="1">
    <source>
        <dbReference type="HAMAP-Rule" id="MF_00023"/>
    </source>
</evidence>
<reference key="1">
    <citation type="journal article" date="2009" name="PLoS Genet.">
        <title>Organised genome dynamics in the Escherichia coli species results in highly diverse adaptive paths.</title>
        <authorList>
            <person name="Touchon M."/>
            <person name="Hoede C."/>
            <person name="Tenaillon O."/>
            <person name="Barbe V."/>
            <person name="Baeriswyl S."/>
            <person name="Bidet P."/>
            <person name="Bingen E."/>
            <person name="Bonacorsi S."/>
            <person name="Bouchier C."/>
            <person name="Bouvet O."/>
            <person name="Calteau A."/>
            <person name="Chiapello H."/>
            <person name="Clermont O."/>
            <person name="Cruveiller S."/>
            <person name="Danchin A."/>
            <person name="Diard M."/>
            <person name="Dossat C."/>
            <person name="Karoui M.E."/>
            <person name="Frapy E."/>
            <person name="Garry L."/>
            <person name="Ghigo J.M."/>
            <person name="Gilles A.M."/>
            <person name="Johnson J."/>
            <person name="Le Bouguenec C."/>
            <person name="Lescat M."/>
            <person name="Mangenot S."/>
            <person name="Martinez-Jehanne V."/>
            <person name="Matic I."/>
            <person name="Nassif X."/>
            <person name="Oztas S."/>
            <person name="Petit M.A."/>
            <person name="Pichon C."/>
            <person name="Rouy Z."/>
            <person name="Ruf C.S."/>
            <person name="Schneider D."/>
            <person name="Tourret J."/>
            <person name="Vacherie B."/>
            <person name="Vallenet D."/>
            <person name="Medigue C."/>
            <person name="Rocha E.P.C."/>
            <person name="Denamur E."/>
        </authorList>
    </citation>
    <scope>NUCLEOTIDE SEQUENCE [LARGE SCALE GENOMIC DNA]</scope>
    <source>
        <strain>UMN026 / ExPEC</strain>
    </source>
</reference>
<name>SSRP_ECOLU</name>
<sequence>MTKKKAHKPGSATIALNKRARHEYFIEEEFEAGLALQGWEVKSLRAGKANISDSYVLLRDGEAFLFGANITPMAVASTHVVCDPTRTRKLLLNQRELDSLYGRVNREGYTVVALSLYWKNAWCKVKIGVAKGKKQHDKRSDIKEREWQVDKARIMKNAHR</sequence>
<organism>
    <name type="scientific">Escherichia coli O17:K52:H18 (strain UMN026 / ExPEC)</name>
    <dbReference type="NCBI Taxonomy" id="585056"/>
    <lineage>
        <taxon>Bacteria</taxon>
        <taxon>Pseudomonadati</taxon>
        <taxon>Pseudomonadota</taxon>
        <taxon>Gammaproteobacteria</taxon>
        <taxon>Enterobacterales</taxon>
        <taxon>Enterobacteriaceae</taxon>
        <taxon>Escherichia</taxon>
    </lineage>
</organism>
<protein>
    <recommendedName>
        <fullName evidence="1">SsrA-binding protein</fullName>
    </recommendedName>
    <alternativeName>
        <fullName evidence="1">Small protein B</fullName>
    </alternativeName>
</protein>
<comment type="function">
    <text evidence="1">Required for rescue of stalled ribosomes mediated by trans-translation. Binds to transfer-messenger RNA (tmRNA), required for stable association of tmRNA with ribosomes. tmRNA and SmpB together mimic tRNA shape, replacing the anticodon stem-loop with SmpB. tmRNA is encoded by the ssrA gene; the 2 termini fold to resemble tRNA(Ala) and it encodes a 'tag peptide', a short internal open reading frame. During trans-translation Ala-aminoacylated tmRNA acts like a tRNA, entering the A-site of stalled ribosomes, displacing the stalled mRNA. The ribosome then switches to translate the ORF on the tmRNA; the nascent peptide is terminated with the 'tag peptide' encoded by the tmRNA and targeted for degradation. The ribosome is freed to recommence translation, which seems to be the essential function of trans-translation.</text>
</comment>
<comment type="subcellular location">
    <subcellularLocation>
        <location evidence="1">Cytoplasm</location>
    </subcellularLocation>
    <text evidence="1">The tmRNA-SmpB complex associates with stalled 70S ribosomes.</text>
</comment>
<comment type="similarity">
    <text evidence="1">Belongs to the SmpB family.</text>
</comment>